<proteinExistence type="inferred from homology"/>
<organism>
    <name type="scientific">Xanthomonas oryzae pv. oryzae (strain PXO99A)</name>
    <dbReference type="NCBI Taxonomy" id="360094"/>
    <lineage>
        <taxon>Bacteria</taxon>
        <taxon>Pseudomonadati</taxon>
        <taxon>Pseudomonadota</taxon>
        <taxon>Gammaproteobacteria</taxon>
        <taxon>Lysobacterales</taxon>
        <taxon>Lysobacteraceae</taxon>
        <taxon>Xanthomonas</taxon>
    </lineage>
</organism>
<feature type="chain" id="PRO_1000090688" description="Phospho-N-acetylmuramoyl-pentapeptide-transferase">
    <location>
        <begin position="1"/>
        <end position="361"/>
    </location>
</feature>
<feature type="transmembrane region" description="Helical" evidence="1">
    <location>
        <begin position="25"/>
        <end position="45"/>
    </location>
</feature>
<feature type="transmembrane region" description="Helical" evidence="1">
    <location>
        <begin position="73"/>
        <end position="93"/>
    </location>
</feature>
<feature type="transmembrane region" description="Helical" evidence="1">
    <location>
        <begin position="98"/>
        <end position="118"/>
    </location>
</feature>
<feature type="transmembrane region" description="Helical" evidence="1">
    <location>
        <begin position="139"/>
        <end position="159"/>
    </location>
</feature>
<feature type="transmembrane region" description="Helical" evidence="1">
    <location>
        <begin position="168"/>
        <end position="188"/>
    </location>
</feature>
<feature type="transmembrane region" description="Helical" evidence="1">
    <location>
        <begin position="200"/>
        <end position="220"/>
    </location>
</feature>
<feature type="transmembrane region" description="Helical" evidence="1">
    <location>
        <begin position="237"/>
        <end position="257"/>
    </location>
</feature>
<feature type="transmembrane region" description="Helical" evidence="1">
    <location>
        <begin position="264"/>
        <end position="284"/>
    </location>
</feature>
<feature type="transmembrane region" description="Helical" evidence="1">
    <location>
        <begin position="289"/>
        <end position="309"/>
    </location>
</feature>
<feature type="transmembrane region" description="Helical" evidence="1">
    <location>
        <begin position="339"/>
        <end position="359"/>
    </location>
</feature>
<gene>
    <name evidence="1" type="primary">mraY</name>
    <name type="ordered locus">PXO_04369</name>
</gene>
<evidence type="ECO:0000255" key="1">
    <source>
        <dbReference type="HAMAP-Rule" id="MF_00038"/>
    </source>
</evidence>
<accession>B2SNZ1</accession>
<protein>
    <recommendedName>
        <fullName evidence="1">Phospho-N-acetylmuramoyl-pentapeptide-transferase</fullName>
        <ecNumber evidence="1">2.7.8.13</ecNumber>
    </recommendedName>
    <alternativeName>
        <fullName evidence="1">UDP-MurNAc-pentapeptide phosphotransferase</fullName>
    </alternativeName>
</protein>
<name>MRAY_XANOP</name>
<dbReference type="EC" id="2.7.8.13" evidence="1"/>
<dbReference type="EMBL" id="CP000967">
    <property type="protein sequence ID" value="ACD57692.1"/>
    <property type="molecule type" value="Genomic_DNA"/>
</dbReference>
<dbReference type="RefSeq" id="WP_012444187.1">
    <property type="nucleotide sequence ID" value="NC_010717.2"/>
</dbReference>
<dbReference type="SMR" id="B2SNZ1"/>
<dbReference type="KEGG" id="xop:PXO_04369"/>
<dbReference type="eggNOG" id="COG0472">
    <property type="taxonomic scope" value="Bacteria"/>
</dbReference>
<dbReference type="HOGENOM" id="CLU_023982_0_0_6"/>
<dbReference type="UniPathway" id="UPA00219"/>
<dbReference type="Proteomes" id="UP000001740">
    <property type="component" value="Chromosome"/>
</dbReference>
<dbReference type="GO" id="GO:0005886">
    <property type="term" value="C:plasma membrane"/>
    <property type="evidence" value="ECO:0007669"/>
    <property type="project" value="UniProtKB-SubCell"/>
</dbReference>
<dbReference type="GO" id="GO:0046872">
    <property type="term" value="F:metal ion binding"/>
    <property type="evidence" value="ECO:0007669"/>
    <property type="project" value="UniProtKB-KW"/>
</dbReference>
<dbReference type="GO" id="GO:0008963">
    <property type="term" value="F:phospho-N-acetylmuramoyl-pentapeptide-transferase activity"/>
    <property type="evidence" value="ECO:0007669"/>
    <property type="project" value="UniProtKB-UniRule"/>
</dbReference>
<dbReference type="GO" id="GO:0051992">
    <property type="term" value="F:UDP-N-acetylmuramoyl-L-alanyl-D-glutamyl-meso-2,6-diaminopimelyl-D-alanyl-D-alanine:undecaprenyl-phosphate transferase activity"/>
    <property type="evidence" value="ECO:0007669"/>
    <property type="project" value="RHEA"/>
</dbReference>
<dbReference type="GO" id="GO:0051301">
    <property type="term" value="P:cell division"/>
    <property type="evidence" value="ECO:0007669"/>
    <property type="project" value="UniProtKB-KW"/>
</dbReference>
<dbReference type="GO" id="GO:0071555">
    <property type="term" value="P:cell wall organization"/>
    <property type="evidence" value="ECO:0007669"/>
    <property type="project" value="UniProtKB-KW"/>
</dbReference>
<dbReference type="GO" id="GO:0009252">
    <property type="term" value="P:peptidoglycan biosynthetic process"/>
    <property type="evidence" value="ECO:0007669"/>
    <property type="project" value="UniProtKB-UniRule"/>
</dbReference>
<dbReference type="GO" id="GO:0008360">
    <property type="term" value="P:regulation of cell shape"/>
    <property type="evidence" value="ECO:0007669"/>
    <property type="project" value="UniProtKB-KW"/>
</dbReference>
<dbReference type="CDD" id="cd06852">
    <property type="entry name" value="GT_MraY"/>
    <property type="match status" value="1"/>
</dbReference>
<dbReference type="HAMAP" id="MF_00038">
    <property type="entry name" value="MraY"/>
    <property type="match status" value="1"/>
</dbReference>
<dbReference type="InterPro" id="IPR000715">
    <property type="entry name" value="Glycosyl_transferase_4"/>
</dbReference>
<dbReference type="InterPro" id="IPR003524">
    <property type="entry name" value="PNAcMuramoyl-5peptid_Trfase"/>
</dbReference>
<dbReference type="InterPro" id="IPR018480">
    <property type="entry name" value="PNAcMuramoyl-5peptid_Trfase_CS"/>
</dbReference>
<dbReference type="NCBIfam" id="TIGR00445">
    <property type="entry name" value="mraY"/>
    <property type="match status" value="1"/>
</dbReference>
<dbReference type="PANTHER" id="PTHR22926">
    <property type="entry name" value="PHOSPHO-N-ACETYLMURAMOYL-PENTAPEPTIDE-TRANSFERASE"/>
    <property type="match status" value="1"/>
</dbReference>
<dbReference type="PANTHER" id="PTHR22926:SF5">
    <property type="entry name" value="PHOSPHO-N-ACETYLMURAMOYL-PENTAPEPTIDE-TRANSFERASE HOMOLOG"/>
    <property type="match status" value="1"/>
</dbReference>
<dbReference type="Pfam" id="PF00953">
    <property type="entry name" value="Glycos_transf_4"/>
    <property type="match status" value="1"/>
</dbReference>
<dbReference type="PROSITE" id="PS01347">
    <property type="entry name" value="MRAY_1"/>
    <property type="match status" value="1"/>
</dbReference>
<dbReference type="PROSITE" id="PS01348">
    <property type="entry name" value="MRAY_2"/>
    <property type="match status" value="1"/>
</dbReference>
<reference key="1">
    <citation type="journal article" date="2008" name="BMC Genomics">
        <title>Genome sequence and rapid evolution of the rice pathogen Xanthomonas oryzae pv. oryzae PXO99A.</title>
        <authorList>
            <person name="Salzberg S.L."/>
            <person name="Sommer D.D."/>
            <person name="Schatz M.C."/>
            <person name="Phillippy A.M."/>
            <person name="Rabinowicz P.D."/>
            <person name="Tsuge S."/>
            <person name="Furutani A."/>
            <person name="Ochiai H."/>
            <person name="Delcher A.L."/>
            <person name="Kelley D."/>
            <person name="Madupu R."/>
            <person name="Puiu D."/>
            <person name="Radune D."/>
            <person name="Shumway M."/>
            <person name="Trapnell C."/>
            <person name="Aparna G."/>
            <person name="Jha G."/>
            <person name="Pandey A."/>
            <person name="Patil P.B."/>
            <person name="Ishihara H."/>
            <person name="Meyer D.F."/>
            <person name="Szurek B."/>
            <person name="Verdier V."/>
            <person name="Koebnik R."/>
            <person name="Dow J.M."/>
            <person name="Ryan R.P."/>
            <person name="Hirata H."/>
            <person name="Tsuyumu S."/>
            <person name="Won Lee S."/>
            <person name="Seo Y.-S."/>
            <person name="Sriariyanum M."/>
            <person name="Ronald P.C."/>
            <person name="Sonti R.V."/>
            <person name="Van Sluys M.-A."/>
            <person name="Leach J.E."/>
            <person name="White F.F."/>
            <person name="Bogdanove A.J."/>
        </authorList>
    </citation>
    <scope>NUCLEOTIDE SEQUENCE [LARGE SCALE GENOMIC DNA]</scope>
    <source>
        <strain>PXO99A</strain>
    </source>
</reference>
<comment type="function">
    <text evidence="1">Catalyzes the initial step of the lipid cycle reactions in the biosynthesis of the cell wall peptidoglycan: transfers peptidoglycan precursor phospho-MurNAc-pentapeptide from UDP-MurNAc-pentapeptide onto the lipid carrier undecaprenyl phosphate, yielding undecaprenyl-pyrophosphoryl-MurNAc-pentapeptide, known as lipid I.</text>
</comment>
<comment type="catalytic activity">
    <reaction evidence="1">
        <text>UDP-N-acetyl-alpha-D-muramoyl-L-alanyl-gamma-D-glutamyl-meso-2,6-diaminopimeloyl-D-alanyl-D-alanine + di-trans,octa-cis-undecaprenyl phosphate = di-trans,octa-cis-undecaprenyl diphospho-N-acetyl-alpha-D-muramoyl-L-alanyl-D-glutamyl-meso-2,6-diaminopimeloyl-D-alanyl-D-alanine + UMP</text>
        <dbReference type="Rhea" id="RHEA:28386"/>
        <dbReference type="ChEBI" id="CHEBI:57865"/>
        <dbReference type="ChEBI" id="CHEBI:60392"/>
        <dbReference type="ChEBI" id="CHEBI:61386"/>
        <dbReference type="ChEBI" id="CHEBI:61387"/>
        <dbReference type="EC" id="2.7.8.13"/>
    </reaction>
</comment>
<comment type="cofactor">
    <cofactor evidence="1">
        <name>Mg(2+)</name>
        <dbReference type="ChEBI" id="CHEBI:18420"/>
    </cofactor>
</comment>
<comment type="pathway">
    <text evidence="1">Cell wall biogenesis; peptidoglycan biosynthesis.</text>
</comment>
<comment type="subcellular location">
    <subcellularLocation>
        <location evidence="1">Cell inner membrane</location>
        <topology evidence="1">Multi-pass membrane protein</topology>
    </subcellularLocation>
</comment>
<comment type="similarity">
    <text evidence="1">Belongs to the glycosyltransferase 4 family. MraY subfamily.</text>
</comment>
<sequence>MLLELARWLQQLESLFGLFNYLTFRGILAALTALFLSLWMGPAVIRKLAQFKGGQPIRQDGPQTHFSKAGTPTMGGSLILLTVTLSVLLWGDLRNRYVWLVLAVMICFGAIGWYDDWIKIVRRDPNGLKSRWKYLLQSIFGLAAGLFLYYTADVPAAITFYIPMFKSIALPLAGVSFVVIAYFWIVGFSNAVNLTDGLDGLAIMPTVLVACALGVFAYASGNVVFAEYLKIPLIPGAGELIIICSAIAGAGLGFLWFNTYPAMVFMGDIGALSLGAVLGTIAVIVRQEMVLVIMGGVFVIETLSVIIQVASFKLTGKRVFRMAPIHHHFELKGWPEPRVIVRFWIISVVLVLIGLATLKVR</sequence>
<keyword id="KW-0131">Cell cycle</keyword>
<keyword id="KW-0132">Cell division</keyword>
<keyword id="KW-0997">Cell inner membrane</keyword>
<keyword id="KW-1003">Cell membrane</keyword>
<keyword id="KW-0133">Cell shape</keyword>
<keyword id="KW-0961">Cell wall biogenesis/degradation</keyword>
<keyword id="KW-0460">Magnesium</keyword>
<keyword id="KW-0472">Membrane</keyword>
<keyword id="KW-0479">Metal-binding</keyword>
<keyword id="KW-0573">Peptidoglycan synthesis</keyword>
<keyword id="KW-0808">Transferase</keyword>
<keyword id="KW-0812">Transmembrane</keyword>
<keyword id="KW-1133">Transmembrane helix</keyword>